<feature type="chain" id="PRO_0000442200" description="Killer cell lectin-like receptor subfamily I member 1">
    <location>
        <begin position="1"/>
        <end position="243"/>
    </location>
</feature>
<feature type="topological domain" description="Cytoplasmic" evidence="9">
    <location>
        <begin position="1"/>
        <end position="80"/>
    </location>
</feature>
<feature type="transmembrane region" description="Helical; Signal-anchor for type II membrane protein" evidence="3">
    <location>
        <begin position="81"/>
        <end position="101"/>
    </location>
</feature>
<feature type="topological domain" description="Extracellular" evidence="9">
    <location>
        <begin position="102"/>
        <end position="243"/>
    </location>
</feature>
<feature type="domain" description="C-type lectin" evidence="4">
    <location>
        <begin position="137"/>
        <end position="239"/>
    </location>
</feature>
<feature type="short sequence motif" description="ITIM motif 1" evidence="1">
    <location>
        <begin position="16"/>
        <end position="21"/>
    </location>
</feature>
<feature type="short sequence motif" description="ITIM motif 2" evidence="1">
    <location>
        <begin position="47"/>
        <end position="52"/>
    </location>
</feature>
<feature type="glycosylation site" description="N-linked (GlcNAc...) asparagine" evidence="5">
    <location>
        <position position="123"/>
    </location>
</feature>
<feature type="glycosylation site" description="N-linked (GlcNAc...) asparagine" evidence="5">
    <location>
        <position position="191"/>
    </location>
</feature>
<feature type="glycosylation site" description="N-linked (GlcNAc...) asparagine" evidence="5">
    <location>
        <position position="194"/>
    </location>
</feature>
<feature type="glycosylation site" description="N-linked (GlcNAc...) asparagine" evidence="5">
    <location>
        <position position="200"/>
    </location>
</feature>
<feature type="glycosylation site" description="N-linked (GlcNAc...) asparagine" evidence="5">
    <location>
        <position position="214"/>
    </location>
</feature>
<feature type="disulfide bond" evidence="2">
    <location>
        <begin position="158"/>
        <end position="238"/>
    </location>
</feature>
<feature type="disulfide bond" evidence="2">
    <location>
        <begin position="217"/>
        <end position="230"/>
    </location>
</feature>
<protein>
    <recommendedName>
        <fullName evidence="8">Killer cell lectin-like receptor subfamily I member 1</fullName>
    </recommendedName>
</protein>
<proteinExistence type="evidence at protein level"/>
<sequence length="243" mass="28175">MPHSKHRDYTADKQDIPYTELKACKSPWKHRTPAVKQSPVVLSEEQLKYAELTFHRTPQLQPRKQTVRRKRQGPKSAVWRVVTCVLGVLCVVLMITMGILVPKLFSGQEEQYRETSLHHLLKNDSSCDPCSHDWIAFGNNFYLFFRGTKSWAESKSACEELNSHLLDIDSKAELENLLLFEINGWILVKKNQTNWSSSENETKLQHTLIDEKKNHSCRYLRGSQFIADDCSSKKPYACEFNKM</sequence>
<keyword id="KW-1003">Cell membrane</keyword>
<keyword id="KW-1015">Disulfide bond</keyword>
<keyword id="KW-0325">Glycoprotein</keyword>
<keyword id="KW-0430">Lectin</keyword>
<keyword id="KW-0472">Membrane</keyword>
<keyword id="KW-0675">Receptor</keyword>
<keyword id="KW-1185">Reference proteome</keyword>
<keyword id="KW-0735">Signal-anchor</keyword>
<keyword id="KW-0812">Transmembrane</keyword>
<keyword id="KW-1133">Transmembrane helix</keyword>
<gene>
    <name evidence="8" type="primary">Klri1</name>
</gene>
<comment type="function">
    <text evidence="7">Lectin-like receptor for natural killer (NK) cells. Heterodimer formation with KLRE1 mediates inhibition of NK cell cytolytic activity.</text>
</comment>
<comment type="subunit">
    <text evidence="7">Heterodimer with KLRE1. Interacts with PTPN6.</text>
</comment>
<comment type="subcellular location">
    <subcellularLocation>
        <location evidence="6">Cell membrane</location>
        <topology evidence="3">Single-pass type II membrane protein</topology>
    </subcellularLocation>
</comment>
<comment type="tissue specificity">
    <text evidence="6">Expressed in natural killer (NK) cells.</text>
</comment>
<comment type="domain">
    <text evidence="1">Contains 2 copies of a cytoplasmic motif that is referred to as the immunoreceptor tyrosine-based inhibitor motif (ITIM). The phosphorylated ITIM motif can bind the SH2 domain of several SH2-containing phosphatases leading to down-regulation of cell activation.</text>
</comment>
<name>KLRI1_RAT</name>
<reference evidence="10" key="1">
    <citation type="journal article" date="2005" name="Immunogenetics">
        <title>Molecular cloning of KLRI1 and KLRI2, a novel pair of lectin-like natural killer-cell receptors with opposing signalling motifs.</title>
        <authorList>
            <person name="Saether P.C."/>
            <person name="Westgaard I.H."/>
            <person name="Flornes L.M."/>
            <person name="Hoelsbrekken S.E."/>
            <person name="Ryan J.C."/>
            <person name="Fossum S."/>
            <person name="Dissen E."/>
        </authorList>
    </citation>
    <scope>NUCLEOTIDE SEQUENCE [MRNA]</scope>
    <scope>SUBCELLULAR LOCATION</scope>
    <scope>TISSUE SPECIFICITY</scope>
    <source>
        <strain evidence="10">Fischer 344</strain>
    </source>
</reference>
<reference evidence="11" key="2">
    <citation type="journal article" date="2004" name="Nature">
        <title>Genome sequence of the Brown Norway rat yields insights into mammalian evolution.</title>
        <authorList>
            <person name="Gibbs R.A."/>
            <person name="Weinstock G.M."/>
            <person name="Metzker M.L."/>
            <person name="Muzny D.M."/>
            <person name="Sodergren E.J."/>
            <person name="Scherer S."/>
            <person name="Scott G."/>
            <person name="Steffen D."/>
            <person name="Worley K.C."/>
            <person name="Burch P.E."/>
            <person name="Okwuonu G."/>
            <person name="Hines S."/>
            <person name="Lewis L."/>
            <person name="Deramo C."/>
            <person name="Delgado O."/>
            <person name="Dugan-Rocha S."/>
            <person name="Miner G."/>
            <person name="Morgan M."/>
            <person name="Hawes A."/>
            <person name="Gill R."/>
            <person name="Holt R.A."/>
            <person name="Adams M.D."/>
            <person name="Amanatides P.G."/>
            <person name="Baden-Tillson H."/>
            <person name="Barnstead M."/>
            <person name="Chin S."/>
            <person name="Evans C.A."/>
            <person name="Ferriera S."/>
            <person name="Fosler C."/>
            <person name="Glodek A."/>
            <person name="Gu Z."/>
            <person name="Jennings D."/>
            <person name="Kraft C.L."/>
            <person name="Nguyen T."/>
            <person name="Pfannkoch C.M."/>
            <person name="Sitter C."/>
            <person name="Sutton G.G."/>
            <person name="Venter J.C."/>
            <person name="Woodage T."/>
            <person name="Smith D."/>
            <person name="Lee H.-M."/>
            <person name="Gustafson E."/>
            <person name="Cahill P."/>
            <person name="Kana A."/>
            <person name="Doucette-Stamm L."/>
            <person name="Weinstock K."/>
            <person name="Fechtel K."/>
            <person name="Weiss R.B."/>
            <person name="Dunn D.M."/>
            <person name="Green E.D."/>
            <person name="Blakesley R.W."/>
            <person name="Bouffard G.G."/>
            <person name="De Jong P.J."/>
            <person name="Osoegawa K."/>
            <person name="Zhu B."/>
            <person name="Marra M."/>
            <person name="Schein J."/>
            <person name="Bosdet I."/>
            <person name="Fjell C."/>
            <person name="Jones S."/>
            <person name="Krzywinski M."/>
            <person name="Mathewson C."/>
            <person name="Siddiqui A."/>
            <person name="Wye N."/>
            <person name="McPherson J."/>
            <person name="Zhao S."/>
            <person name="Fraser C.M."/>
            <person name="Shetty J."/>
            <person name="Shatsman S."/>
            <person name="Geer K."/>
            <person name="Chen Y."/>
            <person name="Abramzon S."/>
            <person name="Nierman W.C."/>
            <person name="Havlak P.H."/>
            <person name="Chen R."/>
            <person name="Durbin K.J."/>
            <person name="Egan A."/>
            <person name="Ren Y."/>
            <person name="Song X.-Z."/>
            <person name="Li B."/>
            <person name="Liu Y."/>
            <person name="Qin X."/>
            <person name="Cawley S."/>
            <person name="Cooney A.J."/>
            <person name="D'Souza L.M."/>
            <person name="Martin K."/>
            <person name="Wu J.Q."/>
            <person name="Gonzalez-Garay M.L."/>
            <person name="Jackson A.R."/>
            <person name="Kalafus K.J."/>
            <person name="McLeod M.P."/>
            <person name="Milosavljevic A."/>
            <person name="Virk D."/>
            <person name="Volkov A."/>
            <person name="Wheeler D.A."/>
            <person name="Zhang Z."/>
            <person name="Bailey J.A."/>
            <person name="Eichler E.E."/>
            <person name="Tuzun E."/>
            <person name="Birney E."/>
            <person name="Mongin E."/>
            <person name="Ureta-Vidal A."/>
            <person name="Woodwark C."/>
            <person name="Zdobnov E."/>
            <person name="Bork P."/>
            <person name="Suyama M."/>
            <person name="Torrents D."/>
            <person name="Alexandersson M."/>
            <person name="Trask B.J."/>
            <person name="Young J.M."/>
            <person name="Huang H."/>
            <person name="Wang H."/>
            <person name="Xing H."/>
            <person name="Daniels S."/>
            <person name="Gietzen D."/>
            <person name="Schmidt J."/>
            <person name="Stevens K."/>
            <person name="Vitt U."/>
            <person name="Wingrove J."/>
            <person name="Camara F."/>
            <person name="Mar Alba M."/>
            <person name="Abril J.F."/>
            <person name="Guigo R."/>
            <person name="Smit A."/>
            <person name="Dubchak I."/>
            <person name="Rubin E.M."/>
            <person name="Couronne O."/>
            <person name="Poliakov A."/>
            <person name="Huebner N."/>
            <person name="Ganten D."/>
            <person name="Goesele C."/>
            <person name="Hummel O."/>
            <person name="Kreitler T."/>
            <person name="Lee Y.-A."/>
            <person name="Monti J."/>
            <person name="Schulz H."/>
            <person name="Zimdahl H."/>
            <person name="Himmelbauer H."/>
            <person name="Lehrach H."/>
            <person name="Jacob H.J."/>
            <person name="Bromberg S."/>
            <person name="Gullings-Handley J."/>
            <person name="Jensen-Seaman M.I."/>
            <person name="Kwitek A.E."/>
            <person name="Lazar J."/>
            <person name="Pasko D."/>
            <person name="Tonellato P.J."/>
            <person name="Twigger S."/>
            <person name="Ponting C.P."/>
            <person name="Duarte J.M."/>
            <person name="Rice S."/>
            <person name="Goodstadt L."/>
            <person name="Beatson S.A."/>
            <person name="Emes R.D."/>
            <person name="Winter E.E."/>
            <person name="Webber C."/>
            <person name="Brandt P."/>
            <person name="Nyakatura G."/>
            <person name="Adetobi M."/>
            <person name="Chiaromonte F."/>
            <person name="Elnitski L."/>
            <person name="Eswara P."/>
            <person name="Hardison R.C."/>
            <person name="Hou M."/>
            <person name="Kolbe D."/>
            <person name="Makova K."/>
            <person name="Miller W."/>
            <person name="Nekrutenko A."/>
            <person name="Riemer C."/>
            <person name="Schwartz S."/>
            <person name="Taylor J."/>
            <person name="Yang S."/>
            <person name="Zhang Y."/>
            <person name="Lindpaintner K."/>
            <person name="Andrews T.D."/>
            <person name="Caccamo M."/>
            <person name="Clamp M."/>
            <person name="Clarke L."/>
            <person name="Curwen V."/>
            <person name="Durbin R.M."/>
            <person name="Eyras E."/>
            <person name="Searle S.M."/>
            <person name="Cooper G.M."/>
            <person name="Batzoglou S."/>
            <person name="Brudno M."/>
            <person name="Sidow A."/>
            <person name="Stone E.A."/>
            <person name="Payseur B.A."/>
            <person name="Bourque G."/>
            <person name="Lopez-Otin C."/>
            <person name="Puente X.S."/>
            <person name="Chakrabarti K."/>
            <person name="Chatterji S."/>
            <person name="Dewey C."/>
            <person name="Pachter L."/>
            <person name="Bray N."/>
            <person name="Yap V.B."/>
            <person name="Caspi A."/>
            <person name="Tesler G."/>
            <person name="Pevzner P.A."/>
            <person name="Haussler D."/>
            <person name="Roskin K.M."/>
            <person name="Baertsch R."/>
            <person name="Clawson H."/>
            <person name="Furey T.S."/>
            <person name="Hinrichs A.S."/>
            <person name="Karolchik D."/>
            <person name="Kent W.J."/>
            <person name="Rosenbloom K.R."/>
            <person name="Trumbower H."/>
            <person name="Weirauch M."/>
            <person name="Cooper D.N."/>
            <person name="Stenson P.D."/>
            <person name="Ma B."/>
            <person name="Brent M."/>
            <person name="Arumugam M."/>
            <person name="Shteynberg D."/>
            <person name="Copley R.R."/>
            <person name="Taylor M.S."/>
            <person name="Riethman H."/>
            <person name="Mudunuri U."/>
            <person name="Peterson J."/>
            <person name="Guyer M."/>
            <person name="Felsenfeld A."/>
            <person name="Old S."/>
            <person name="Mockrin S."/>
            <person name="Collins F.S."/>
        </authorList>
    </citation>
    <scope>NUCLEOTIDE SEQUENCE [LARGE SCALE GENOMIC DNA]</scope>
    <source>
        <strain>Brown Norway</strain>
    </source>
</reference>
<reference evidence="9" key="3">
    <citation type="journal article" date="2008" name="J. Immunol.">
        <title>KLRE/I1 and KLRE/I2: a novel pair of heterodimeric receptors that inversely regulate NK cell cytotoxicity.</title>
        <authorList>
            <person name="Saether P.C."/>
            <person name="Westgaard I.H."/>
            <person name="Hoelsbrekken S.E."/>
            <person name="Benjamin J."/>
            <person name="Lanier L.L."/>
            <person name="Fossum S."/>
            <person name="Dissen E."/>
        </authorList>
    </citation>
    <scope>FUNCTION</scope>
    <scope>SUBUNIT</scope>
    <scope>INTERACTION WITH /KLRE1 AND PTPN6</scope>
    <scope>SUBCELLULAR LOCATION</scope>
</reference>
<evidence type="ECO:0000250" key="1">
    <source>
        <dbReference type="UniProtKB" id="P27812"/>
    </source>
</evidence>
<evidence type="ECO:0000250" key="2">
    <source>
        <dbReference type="UniProtKB" id="Q13241"/>
    </source>
</evidence>
<evidence type="ECO:0000255" key="3"/>
<evidence type="ECO:0000255" key="4">
    <source>
        <dbReference type="PROSITE-ProRule" id="PRU00040"/>
    </source>
</evidence>
<evidence type="ECO:0000255" key="5">
    <source>
        <dbReference type="PROSITE-ProRule" id="PRU00498"/>
    </source>
</evidence>
<evidence type="ECO:0000269" key="6">
    <source>
    </source>
</evidence>
<evidence type="ECO:0000269" key="7">
    <source>
    </source>
</evidence>
<evidence type="ECO:0000303" key="8">
    <source>
    </source>
</evidence>
<evidence type="ECO:0000305" key="9"/>
<evidence type="ECO:0000312" key="10">
    <source>
        <dbReference type="EMBL" id="AAQ20111.1"/>
    </source>
</evidence>
<evidence type="ECO:0000312" key="11">
    <source>
        <dbReference type="Proteomes" id="UP000002494"/>
    </source>
</evidence>
<accession>Q5DT39</accession>
<accession>E9PTP0</accession>
<organism evidence="10">
    <name type="scientific">Rattus norvegicus</name>
    <name type="common">Rat</name>
    <dbReference type="NCBI Taxonomy" id="10116"/>
    <lineage>
        <taxon>Eukaryota</taxon>
        <taxon>Metazoa</taxon>
        <taxon>Chordata</taxon>
        <taxon>Craniata</taxon>
        <taxon>Vertebrata</taxon>
        <taxon>Euteleostomi</taxon>
        <taxon>Mammalia</taxon>
        <taxon>Eutheria</taxon>
        <taxon>Euarchontoglires</taxon>
        <taxon>Glires</taxon>
        <taxon>Rodentia</taxon>
        <taxon>Myomorpha</taxon>
        <taxon>Muroidea</taxon>
        <taxon>Muridae</taxon>
        <taxon>Murinae</taxon>
        <taxon>Rattus</taxon>
    </lineage>
</organism>
<dbReference type="EMBL" id="AY286494">
    <property type="protein sequence ID" value="AAQ20111.1"/>
    <property type="molecule type" value="mRNA"/>
</dbReference>
<dbReference type="EMBL" id="AC108288">
    <property type="status" value="NOT_ANNOTATED_CDS"/>
    <property type="molecule type" value="Genomic_DNA"/>
</dbReference>
<dbReference type="RefSeq" id="NP_001012667.1">
    <property type="nucleotide sequence ID" value="NM_001012649.2"/>
</dbReference>
<dbReference type="SMR" id="Q5DT39"/>
<dbReference type="FunCoup" id="Q5DT39">
    <property type="interactions" value="8"/>
</dbReference>
<dbReference type="STRING" id="10116.ENSRNOP00000069881"/>
<dbReference type="GlyCosmos" id="Q5DT39">
    <property type="glycosylation" value="5 sites, No reported glycans"/>
</dbReference>
<dbReference type="GlyGen" id="Q5DT39">
    <property type="glycosylation" value="5 sites"/>
</dbReference>
<dbReference type="PaxDb" id="10116-ENSRNOP00000062814"/>
<dbReference type="Ensembl" id="ENSRNOT00000090813.2">
    <property type="protein sequence ID" value="ENSRNOP00000069881.1"/>
    <property type="gene ID" value="ENSRNOG00000052803.2"/>
</dbReference>
<dbReference type="GeneID" id="503651"/>
<dbReference type="KEGG" id="rno:503651"/>
<dbReference type="UCSC" id="RGD:1359344">
    <property type="organism name" value="rat"/>
</dbReference>
<dbReference type="AGR" id="RGD:1359344"/>
<dbReference type="CTD" id="503550"/>
<dbReference type="RGD" id="1359344">
    <property type="gene designation" value="Klri1"/>
</dbReference>
<dbReference type="eggNOG" id="KOG4297">
    <property type="taxonomic scope" value="Eukaryota"/>
</dbReference>
<dbReference type="GeneTree" id="ENSGT00940000164228"/>
<dbReference type="HOGENOM" id="CLU_049894_9_2_1"/>
<dbReference type="InParanoid" id="Q5DT39"/>
<dbReference type="OMA" id="RSTKWQV"/>
<dbReference type="OrthoDB" id="7357196at2759"/>
<dbReference type="PhylomeDB" id="Q5DT39"/>
<dbReference type="TreeFam" id="TF336674"/>
<dbReference type="PRO" id="PR:Q5DT39"/>
<dbReference type="Proteomes" id="UP000002494">
    <property type="component" value="Chromosome 4"/>
</dbReference>
<dbReference type="Bgee" id="ENSRNOG00000052803">
    <property type="expression patterns" value="Expressed in spleen and 14 other cell types or tissues"/>
</dbReference>
<dbReference type="GO" id="GO:0009897">
    <property type="term" value="C:external side of plasma membrane"/>
    <property type="evidence" value="ECO:0000318"/>
    <property type="project" value="GO_Central"/>
</dbReference>
<dbReference type="GO" id="GO:0005886">
    <property type="term" value="C:plasma membrane"/>
    <property type="evidence" value="ECO:0000314"/>
    <property type="project" value="MGI"/>
</dbReference>
<dbReference type="GO" id="GO:0030246">
    <property type="term" value="F:carbohydrate binding"/>
    <property type="evidence" value="ECO:0007669"/>
    <property type="project" value="UniProtKB-KW"/>
</dbReference>
<dbReference type="GO" id="GO:0004888">
    <property type="term" value="F:transmembrane signaling receptor activity"/>
    <property type="evidence" value="ECO:0000318"/>
    <property type="project" value="GO_Central"/>
</dbReference>
<dbReference type="GO" id="GO:0045954">
    <property type="term" value="P:positive regulation of natural killer cell mediated cytotoxicity"/>
    <property type="evidence" value="ECO:0000318"/>
    <property type="project" value="GO_Central"/>
</dbReference>
<dbReference type="GO" id="GO:0002223">
    <property type="term" value="P:stimulatory C-type lectin receptor signaling pathway"/>
    <property type="evidence" value="ECO:0000318"/>
    <property type="project" value="GO_Central"/>
</dbReference>
<dbReference type="CDD" id="cd03593">
    <property type="entry name" value="CLECT_NK_receptors_like"/>
    <property type="match status" value="1"/>
</dbReference>
<dbReference type="FunFam" id="3.10.100.10:FF:000175">
    <property type="entry name" value="Killer cell lectin-like receptor subfamily I member 1"/>
    <property type="match status" value="1"/>
</dbReference>
<dbReference type="Gene3D" id="3.10.100.10">
    <property type="entry name" value="Mannose-Binding Protein A, subunit A"/>
    <property type="match status" value="1"/>
</dbReference>
<dbReference type="InterPro" id="IPR001304">
    <property type="entry name" value="C-type_lectin-like"/>
</dbReference>
<dbReference type="InterPro" id="IPR016186">
    <property type="entry name" value="C-type_lectin-like/link_sf"/>
</dbReference>
<dbReference type="InterPro" id="IPR016187">
    <property type="entry name" value="CTDL_fold"/>
</dbReference>
<dbReference type="InterPro" id="IPR050919">
    <property type="entry name" value="NKG2/CD94_NK_receptors"/>
</dbReference>
<dbReference type="InterPro" id="IPR033992">
    <property type="entry name" value="NKR-like_CTLD"/>
</dbReference>
<dbReference type="PANTHER" id="PTHR22800">
    <property type="entry name" value="C-TYPE LECTIN PROTEINS"/>
    <property type="match status" value="1"/>
</dbReference>
<dbReference type="PANTHER" id="PTHR22800:SF250">
    <property type="entry name" value="KILLER CELL LECTIN-LIKE RECEPTOR SUBFAMILY I MEMBER 1"/>
    <property type="match status" value="1"/>
</dbReference>
<dbReference type="Pfam" id="PF00059">
    <property type="entry name" value="Lectin_C"/>
    <property type="match status" value="1"/>
</dbReference>
<dbReference type="SMART" id="SM00034">
    <property type="entry name" value="CLECT"/>
    <property type="match status" value="1"/>
</dbReference>
<dbReference type="SUPFAM" id="SSF56436">
    <property type="entry name" value="C-type lectin-like"/>
    <property type="match status" value="1"/>
</dbReference>
<dbReference type="PROSITE" id="PS50041">
    <property type="entry name" value="C_TYPE_LECTIN_2"/>
    <property type="match status" value="1"/>
</dbReference>